<reference key="1">
    <citation type="journal article" date="2004" name="Genome Res.">
        <title>The status, quality, and expansion of the NIH full-length cDNA project: the Mammalian Gene Collection (MGC).</title>
        <authorList>
            <consortium name="The MGC Project Team"/>
        </authorList>
    </citation>
    <scope>NUCLEOTIDE SEQUENCE [LARGE SCALE MRNA]</scope>
    <source>
        <strain>C57BL/6J</strain>
        <tissue>Brain</tissue>
        <tissue>Mammary tumor</tissue>
    </source>
</reference>
<reference key="2">
    <citation type="journal article" date="2004" name="DNA Res.">
        <title>Prediction of the coding sequences of mouse homologues of KIAA gene: IV. The complete nucleotide sequences of 500 mouse KIAA-homologous cDNAs identified by screening of terminal sequences of cDNA clones randomly sampled from size-fractionated libraries.</title>
        <authorList>
            <person name="Okazaki N."/>
            <person name="Kikuno R."/>
            <person name="Ohara R."/>
            <person name="Inamoto S."/>
            <person name="Koseki H."/>
            <person name="Hiraoka S."/>
            <person name="Saga Y."/>
            <person name="Seino S."/>
            <person name="Nishimura M."/>
            <person name="Kaisho T."/>
            <person name="Hoshino K."/>
            <person name="Kitamura H."/>
            <person name="Nagase T."/>
            <person name="Ohara O."/>
            <person name="Koga H."/>
        </authorList>
    </citation>
    <scope>NUCLEOTIDE SEQUENCE [LARGE SCALE MRNA] OF 1-1057</scope>
    <source>
        <tissue>Embryonic tail</tissue>
    </source>
</reference>
<reference key="3">
    <citation type="journal article" date="2005" name="Int. J. Mol. Med.">
        <title>Identification and characterization of TMEM16H gene in silico.</title>
        <authorList>
            <person name="Katoh M."/>
            <person name="Katoh M."/>
        </authorList>
    </citation>
    <scope>IDENTIFICATION</scope>
</reference>
<reference key="4">
    <citation type="journal article" date="2008" name="Dev. Dyn.">
        <title>Expression of TMEM16 paralogs during murine embryogenesis.</title>
        <authorList>
            <person name="Rock J.R."/>
            <person name="Harfe B.D."/>
        </authorList>
    </citation>
    <scope>DEVELOPMENTAL STAGE</scope>
</reference>
<reference key="5">
    <citation type="journal article" date="2010" name="Cell">
        <title>A tissue-specific atlas of mouse protein phosphorylation and expression.</title>
        <authorList>
            <person name="Huttlin E.L."/>
            <person name="Jedrychowski M.P."/>
            <person name="Elias J.E."/>
            <person name="Goswami T."/>
            <person name="Rad R."/>
            <person name="Beausoleil S.A."/>
            <person name="Villen J."/>
            <person name="Haas W."/>
            <person name="Sowa M.E."/>
            <person name="Gygi S.P."/>
        </authorList>
    </citation>
    <scope>PHOSPHORYLATION [LARGE SCALE ANALYSIS] AT SER-318 AND SER-665</scope>
    <scope>IDENTIFICATION BY MASS SPECTROMETRY [LARGE SCALE ANALYSIS]</scope>
    <source>
        <tissue>Brain</tissue>
    </source>
</reference>
<reference key="6">
    <citation type="journal article" date="2010" name="J. Biol. Chem.">
        <title>Expression and function of epithelial anoctamins.</title>
        <authorList>
            <person name="Schreiber R."/>
            <person name="Uliyakina I."/>
            <person name="Kongsuphol P."/>
            <person name="Warth R."/>
            <person name="Mirza M."/>
            <person name="Martins J.R."/>
            <person name="Kunzelmann K."/>
        </authorList>
    </citation>
    <scope>TISSUE SPECIFICITY</scope>
</reference>
<reference key="7">
    <citation type="journal article" date="2012" name="Exp. Physiol.">
        <title>The anoctamin (TMEM16) gene family: calcium-activated chloride channels come of age.</title>
        <authorList>
            <person name="Winpenny J.P."/>
            <person name="Gray M.A."/>
        </authorList>
    </citation>
    <scope>REVIEW</scope>
</reference>
<reference key="8">
    <citation type="journal article" date="2014" name="Mol. Cell. Proteomics">
        <title>Immunoaffinity enrichment and mass spectrometry analysis of protein methylation.</title>
        <authorList>
            <person name="Guo A."/>
            <person name="Gu H."/>
            <person name="Zhou J."/>
            <person name="Mulhern D."/>
            <person name="Wang Y."/>
            <person name="Lee K.A."/>
            <person name="Yang V."/>
            <person name="Aguiar M."/>
            <person name="Kornhauser J."/>
            <person name="Jia X."/>
            <person name="Ren J."/>
            <person name="Beausoleil S.A."/>
            <person name="Silva J.C."/>
            <person name="Vemulapalli V."/>
            <person name="Bedford M.T."/>
            <person name="Comb M.J."/>
        </authorList>
    </citation>
    <scope>METHYLATION [LARGE SCALE ANALYSIS] AT ARG-991 AND ARG-999</scope>
    <scope>IDENTIFICATION BY MASS SPECTROMETRY [LARGE SCALE ANALYSIS]</scope>
    <source>
        <tissue>Brain</tissue>
        <tissue>Embryo</tissue>
    </source>
</reference>
<feature type="initiator methionine" description="Removed" evidence="2">
    <location>
        <position position="1"/>
    </location>
</feature>
<feature type="chain" id="PRO_0000249004" description="Anoctamin-8">
    <location>
        <begin position="2"/>
        <end position="1060"/>
    </location>
</feature>
<feature type="topological domain" description="Cytoplasmic" evidence="3">
    <location>
        <begin position="2"/>
        <end position="244"/>
    </location>
</feature>
<feature type="transmembrane region" description="Helical" evidence="3">
    <location>
        <begin position="245"/>
        <end position="265"/>
    </location>
</feature>
<feature type="topological domain" description="Extracellular" evidence="3">
    <location>
        <begin position="266"/>
        <end position="281"/>
    </location>
</feature>
<feature type="transmembrane region" description="Helical" evidence="3">
    <location>
        <begin position="282"/>
        <end position="302"/>
    </location>
</feature>
<feature type="topological domain" description="Cytoplasmic" evidence="3">
    <location>
        <begin position="303"/>
        <end position="356"/>
    </location>
</feature>
<feature type="transmembrane region" description="Helical" evidence="3">
    <location>
        <begin position="357"/>
        <end position="377"/>
    </location>
</feature>
<feature type="topological domain" description="Extracellular" evidence="3">
    <location>
        <begin position="378"/>
        <end position="400"/>
    </location>
</feature>
<feature type="transmembrane region" description="Helical" evidence="3">
    <location>
        <begin position="401"/>
        <end position="421"/>
    </location>
</feature>
<feature type="topological domain" description="Cytoplasmic" evidence="3">
    <location>
        <begin position="422"/>
        <end position="437"/>
    </location>
</feature>
<feature type="transmembrane region" description="Helical" evidence="3">
    <location>
        <begin position="438"/>
        <end position="458"/>
    </location>
</feature>
<feature type="topological domain" description="Extracellular" evidence="3">
    <location>
        <begin position="459"/>
        <end position="745"/>
    </location>
</feature>
<feature type="transmembrane region" description="Helical" evidence="3">
    <location>
        <begin position="746"/>
        <end position="766"/>
    </location>
</feature>
<feature type="topological domain" description="Cytoplasmic" evidence="3">
    <location>
        <begin position="767"/>
        <end position="802"/>
    </location>
</feature>
<feature type="transmembrane region" description="Helical" evidence="3">
    <location>
        <begin position="803"/>
        <end position="823"/>
    </location>
</feature>
<feature type="topological domain" description="Extracellular" evidence="3">
    <location>
        <begin position="824"/>
        <end position="836"/>
    </location>
</feature>
<feature type="transmembrane region" description="Helical" evidence="3">
    <location>
        <begin position="837"/>
        <end position="857"/>
    </location>
</feature>
<feature type="topological domain" description="Cytoplasmic" evidence="3">
    <location>
        <begin position="858"/>
        <end position="1060"/>
    </location>
</feature>
<feature type="region of interest" description="Disordered" evidence="4">
    <location>
        <begin position="1"/>
        <end position="32"/>
    </location>
</feature>
<feature type="region of interest" description="Disordered" evidence="4">
    <location>
        <begin position="529"/>
        <end position="605"/>
    </location>
</feature>
<feature type="region of interest" description="Disordered" evidence="4">
    <location>
        <begin position="619"/>
        <end position="640"/>
    </location>
</feature>
<feature type="region of interest" description="Disordered" evidence="4">
    <location>
        <begin position="653"/>
        <end position="672"/>
    </location>
</feature>
<feature type="region of interest" description="Disordered" evidence="4">
    <location>
        <begin position="680"/>
        <end position="723"/>
    </location>
</feature>
<feature type="region of interest" description="Disordered" evidence="4">
    <location>
        <begin position="884"/>
        <end position="1060"/>
    </location>
</feature>
<feature type="compositionally biased region" description="Basic and acidic residues" evidence="4">
    <location>
        <begin position="14"/>
        <end position="23"/>
    </location>
</feature>
<feature type="compositionally biased region" description="Gly residues" evidence="4">
    <location>
        <begin position="534"/>
        <end position="547"/>
    </location>
</feature>
<feature type="compositionally biased region" description="Acidic residues" evidence="4">
    <location>
        <begin position="549"/>
        <end position="559"/>
    </location>
</feature>
<feature type="compositionally biased region" description="Acidic residues" evidence="4">
    <location>
        <begin position="581"/>
        <end position="602"/>
    </location>
</feature>
<feature type="compositionally biased region" description="Basic and acidic residues" evidence="4">
    <location>
        <begin position="680"/>
        <end position="694"/>
    </location>
</feature>
<feature type="compositionally biased region" description="Basic and acidic residues" evidence="4">
    <location>
        <begin position="899"/>
        <end position="927"/>
    </location>
</feature>
<feature type="compositionally biased region" description="Basic and acidic residues" evidence="4">
    <location>
        <begin position="935"/>
        <end position="950"/>
    </location>
</feature>
<feature type="compositionally biased region" description="Pro residues" evidence="4">
    <location>
        <begin position="972"/>
        <end position="986"/>
    </location>
</feature>
<feature type="compositionally biased region" description="Basic and acidic residues" evidence="4">
    <location>
        <begin position="1049"/>
        <end position="1060"/>
    </location>
</feature>
<feature type="modified residue" description="N-acetylalanine" evidence="2">
    <location>
        <position position="2"/>
    </location>
</feature>
<feature type="modified residue" description="Phosphoserine" evidence="8">
    <location>
        <position position="318"/>
    </location>
</feature>
<feature type="modified residue" description="Phosphoserine" evidence="8">
    <location>
        <position position="665"/>
    </location>
</feature>
<feature type="modified residue" description="Phosphoserine" evidence="2">
    <location>
        <position position="796"/>
    </location>
</feature>
<feature type="modified residue" description="Asymmetric dimethylarginine; alternate" evidence="9">
    <location>
        <position position="991"/>
    </location>
</feature>
<feature type="modified residue" description="Omega-N-methylarginine; alternate" evidence="9">
    <location>
        <position position="991"/>
    </location>
</feature>
<feature type="modified residue" description="Omega-N-methylarginine" evidence="9">
    <location>
        <position position="999"/>
    </location>
</feature>
<feature type="glycosylation site" description="N-linked (GlcNAc...) asparagine" evidence="3">
    <location>
        <position position="708"/>
    </location>
</feature>
<feature type="sequence conflict" description="In Ref. 2; BAD32500." evidence="7" ref="2">
    <original>I</original>
    <variation>AV</variation>
    <location>
        <position position="196"/>
    </location>
</feature>
<protein>
    <recommendedName>
        <fullName>Anoctamin-8</fullName>
    </recommendedName>
    <alternativeName>
        <fullName>Transmembrane protein 16H</fullName>
    </alternativeName>
</protein>
<accession>Q6PB70</accession>
<accession>Q05CB5</accession>
<accession>Q69ZE4</accession>
<organism>
    <name type="scientific">Mus musculus</name>
    <name type="common">Mouse</name>
    <dbReference type="NCBI Taxonomy" id="10090"/>
    <lineage>
        <taxon>Eukaryota</taxon>
        <taxon>Metazoa</taxon>
        <taxon>Chordata</taxon>
        <taxon>Craniata</taxon>
        <taxon>Vertebrata</taxon>
        <taxon>Euteleostomi</taxon>
        <taxon>Mammalia</taxon>
        <taxon>Eutheria</taxon>
        <taxon>Euarchontoglires</taxon>
        <taxon>Glires</taxon>
        <taxon>Rodentia</taxon>
        <taxon>Myomorpha</taxon>
        <taxon>Muroidea</taxon>
        <taxon>Muridae</taxon>
        <taxon>Murinae</taxon>
        <taxon>Mus</taxon>
        <taxon>Mus</taxon>
    </lineage>
</organism>
<comment type="function">
    <text evidence="1">Does not exhibit calcium-activated chloride channel (CaCC) activity.</text>
</comment>
<comment type="subcellular location">
    <subcellularLocation>
        <location>Cell membrane</location>
        <topology>Multi-pass membrane protein</topology>
    </subcellularLocation>
    <text evidence="1">Shows predominantly an intracellular localization with a weak expression in the cell membrane.</text>
</comment>
<comment type="tissue specificity">
    <text evidence="6">Predominant expression seen in epithelial tissues.</text>
</comment>
<comment type="developmental stage">
    <text evidence="5">Detected in the mantle layer of the neural tube and in the dorsal root ganglia at 14.5 dpc.</text>
</comment>
<comment type="miscellaneous">
    <text>The term 'anoctamin' was coined because these channels are anion selective and have eight (OCT) transmembrane segments. There is some dissatisfaction in the field with the Ano nomenclature because it is not certain that all the members of this family are anion channels or have the 8-transmembrane topology.</text>
</comment>
<comment type="similarity">
    <text evidence="7">Belongs to the anoctamin family.</text>
</comment>
<comment type="sequence caution" evidence="7">
    <conflict type="erroneous initiation">
        <sequence resource="EMBL-CDS" id="BAD32500"/>
    </conflict>
    <text>Extended N-terminus.</text>
</comment>
<dbReference type="EMBL" id="BC027735">
    <property type="protein sequence ID" value="AAH27735.1"/>
    <property type="molecule type" value="mRNA"/>
</dbReference>
<dbReference type="EMBL" id="BC059855">
    <property type="protein sequence ID" value="AAH59855.1"/>
    <property type="molecule type" value="mRNA"/>
</dbReference>
<dbReference type="EMBL" id="AK173222">
    <property type="protein sequence ID" value="BAD32500.1"/>
    <property type="status" value="ALT_INIT"/>
    <property type="molecule type" value="Transcribed_RNA"/>
</dbReference>
<dbReference type="CCDS" id="CCDS52585.1"/>
<dbReference type="RefSeq" id="NP_001158151.1">
    <property type="nucleotide sequence ID" value="NM_001164679.1"/>
</dbReference>
<dbReference type="SMR" id="Q6PB70"/>
<dbReference type="BioGRID" id="238189">
    <property type="interactions" value="3"/>
</dbReference>
<dbReference type="FunCoup" id="Q6PB70">
    <property type="interactions" value="411"/>
</dbReference>
<dbReference type="STRING" id="10090.ENSMUSP00000091157"/>
<dbReference type="GlyCosmos" id="Q6PB70">
    <property type="glycosylation" value="1 site, No reported glycans"/>
</dbReference>
<dbReference type="GlyGen" id="Q6PB70">
    <property type="glycosylation" value="1 site"/>
</dbReference>
<dbReference type="iPTMnet" id="Q6PB70"/>
<dbReference type="PhosphoSitePlus" id="Q6PB70"/>
<dbReference type="PaxDb" id="10090-ENSMUSP00000091157"/>
<dbReference type="PeptideAtlas" id="Q6PB70"/>
<dbReference type="ProteomicsDB" id="281871"/>
<dbReference type="Pumba" id="Q6PB70"/>
<dbReference type="Antibodypedia" id="43758">
    <property type="antibodies" value="24 antibodies from 13 providers"/>
</dbReference>
<dbReference type="Ensembl" id="ENSMUST00000093450.6">
    <property type="protein sequence ID" value="ENSMUSP00000091157.5"/>
    <property type="gene ID" value="ENSMUSG00000034863.10"/>
</dbReference>
<dbReference type="GeneID" id="382014"/>
<dbReference type="KEGG" id="mmu:382014"/>
<dbReference type="UCSC" id="uc009mdl.2">
    <property type="organism name" value="mouse"/>
</dbReference>
<dbReference type="AGR" id="MGI:2687327"/>
<dbReference type="CTD" id="57719"/>
<dbReference type="MGI" id="MGI:2687327">
    <property type="gene designation" value="Ano8"/>
</dbReference>
<dbReference type="VEuPathDB" id="HostDB:ENSMUSG00000034863"/>
<dbReference type="eggNOG" id="KOG2513">
    <property type="taxonomic scope" value="Eukaryota"/>
</dbReference>
<dbReference type="GeneTree" id="ENSGT00940000157019"/>
<dbReference type="HOGENOM" id="CLU_006685_2_1_1"/>
<dbReference type="InParanoid" id="Q6PB70"/>
<dbReference type="OMA" id="YLIHVAV"/>
<dbReference type="PhylomeDB" id="Q6PB70"/>
<dbReference type="TreeFam" id="TF314265"/>
<dbReference type="Reactome" id="R-MMU-2672351">
    <property type="pathway name" value="Stimuli-sensing channels"/>
</dbReference>
<dbReference type="Reactome" id="R-MMU-381426">
    <property type="pathway name" value="Regulation of Insulin-like Growth Factor (IGF) transport and uptake by Insulin-like Growth Factor Binding Proteins (IGFBPs)"/>
</dbReference>
<dbReference type="Reactome" id="R-MMU-8957275">
    <property type="pathway name" value="Post-translational protein phosphorylation"/>
</dbReference>
<dbReference type="BioGRID-ORCS" id="382014">
    <property type="hits" value="4 hits in 78 CRISPR screens"/>
</dbReference>
<dbReference type="ChiTaRS" id="Ano8">
    <property type="organism name" value="mouse"/>
</dbReference>
<dbReference type="PRO" id="PR:Q6PB70"/>
<dbReference type="Proteomes" id="UP000000589">
    <property type="component" value="Chromosome 8"/>
</dbReference>
<dbReference type="RNAct" id="Q6PB70">
    <property type="molecule type" value="protein"/>
</dbReference>
<dbReference type="Bgee" id="ENSMUSG00000034863">
    <property type="expression patterns" value="Expressed in cortical plate and 95 other cell types or tissues"/>
</dbReference>
<dbReference type="ExpressionAtlas" id="Q6PB70">
    <property type="expression patterns" value="baseline and differential"/>
</dbReference>
<dbReference type="GO" id="GO:0005886">
    <property type="term" value="C:plasma membrane"/>
    <property type="evidence" value="ECO:0007669"/>
    <property type="project" value="UniProtKB-SubCell"/>
</dbReference>
<dbReference type="InterPro" id="IPR007632">
    <property type="entry name" value="Anoctamin"/>
</dbReference>
<dbReference type="InterPro" id="IPR049452">
    <property type="entry name" value="Anoctamin_TM"/>
</dbReference>
<dbReference type="PANTHER" id="PTHR12308">
    <property type="entry name" value="ANOCTAMIN"/>
    <property type="match status" value="1"/>
</dbReference>
<dbReference type="PANTHER" id="PTHR12308:SF51">
    <property type="entry name" value="ANOCTAMIN-8"/>
    <property type="match status" value="1"/>
</dbReference>
<dbReference type="Pfam" id="PF04547">
    <property type="entry name" value="Anoctamin"/>
    <property type="match status" value="2"/>
</dbReference>
<sequence length="1060" mass="119101">MAEAASGAGDVTLEGERGKRPPPEGEPAAPASGVLDKLFGKRLLQAGRYLVSHKAWMKTVPTEDCDVLMTFPDTTDDHTLLWLLNHIRVGIPELIVQVRHHRHTRAYAFFVTATYESLLRGADELGLRKAVKAEFGGGTRSFSCEEDFIYENVESELRFFTSQERQSIIRFWLQNLRAKQGEALHNVRFLEDQPIIPELAARGIIQQVFPVHEQRILNRLMKSWVQAVCENQPLDDICDYFGVKIAMYFAWLGFYTSAMVYPAVFGSVLYTFTEADQTSRDVSCVVFALFNVIWSTLFLEEWKRRGAELAYKWGTLDSPGEAVEEPRPQFRGIRRISPITRAEEFYYPPWKRLLFQLLVSLPLCLACLICVFILMLGCFQLQELVLSVKGLPRLVRFLPKVMLALLVSVSAEGYKKLAVWLNDMENYRLESTYERHLIIKVVLFQFVNSYLSLFYIGFYLKDMDRLKEMLATLLITRQLLQNVREVLQPHLYRRLGSGELGLRTILELARALLGLLNPLRPDPRRHLEAQADEGGAGSRRCLGGGCGAPEEENEEEEEAAVERRPAGEGGEVPEGPRGGKEEDEEEDDDEDEDEEYEGEEGSLLDCGLRLKKVSFAERGAGRRRPGPSPDGLLEEGSPTMVEKGLEPGVFTLAEEDDEPEGPPGSPGPEPQTVLLRRARGEGRDQGPDGDRDTETGSGDAAGRQKRHNRSSWIDPPEEEHSPQLTQAELESCMKKYEDTFQDYQEMFVQFGYVVLFSSAFPLAALCALVNNLIEIRSDAFKLCTGLQRPFGRRVESIGQWQKVMEAMGVLAIVVNCYLIGQCGQLQRLFPWLSPEAAIVSVVVLEHLALLVKYLIHVAIPDIPGWVAEEMAKLEYQRREAFKRHERQAQQRFQQQQRRRREEEERQRHAEQQARRERDTGGREEARAEAPGPDPVAERGAAKAKGSERPRRPGALLPPGPVLRLKQIIPLQTRPPAPTGCAPPPRSPADTRLPAFLSLRFLKAPERGPSPPRPGKLFAFSAREPSANGAPGGGARAHRSAGDEPAAAEPEPRPEDAGHRP</sequence>
<name>ANO8_MOUSE</name>
<keyword id="KW-0007">Acetylation</keyword>
<keyword id="KW-1003">Cell membrane</keyword>
<keyword id="KW-0325">Glycoprotein</keyword>
<keyword id="KW-0472">Membrane</keyword>
<keyword id="KW-0488">Methylation</keyword>
<keyword id="KW-0597">Phosphoprotein</keyword>
<keyword id="KW-1185">Reference proteome</keyword>
<keyword id="KW-0812">Transmembrane</keyword>
<keyword id="KW-1133">Transmembrane helix</keyword>
<evidence type="ECO:0000250" key="1"/>
<evidence type="ECO:0000250" key="2">
    <source>
        <dbReference type="UniProtKB" id="Q9HCE9"/>
    </source>
</evidence>
<evidence type="ECO:0000255" key="3"/>
<evidence type="ECO:0000256" key="4">
    <source>
        <dbReference type="SAM" id="MobiDB-lite"/>
    </source>
</evidence>
<evidence type="ECO:0000269" key="5">
    <source>
    </source>
</evidence>
<evidence type="ECO:0000269" key="6">
    <source>
    </source>
</evidence>
<evidence type="ECO:0000305" key="7"/>
<evidence type="ECO:0007744" key="8">
    <source>
    </source>
</evidence>
<evidence type="ECO:0007744" key="9">
    <source>
    </source>
</evidence>
<gene>
    <name type="primary">Ano8</name>
    <name type="synonym">Kiaa1623</name>
    <name type="synonym">Tmem16h</name>
</gene>
<proteinExistence type="evidence at protein level"/>